<gene>
    <name type="primary">TAS2R14</name>
</gene>
<evidence type="ECO:0000250" key="1">
    <source>
        <dbReference type="UniProtKB" id="Q9NYV8"/>
    </source>
</evidence>
<evidence type="ECO:0000255" key="2"/>
<evidence type="ECO:0000305" key="3"/>
<reference key="1">
    <citation type="journal article" date="2005" name="Mol. Biol. Evol.">
        <title>Evolution of bitter taste receptors in humans and apes.</title>
        <authorList>
            <person name="Fischer A."/>
            <person name="Gilad Y."/>
            <person name="Man O."/>
            <person name="Paeaebo S."/>
        </authorList>
    </citation>
    <scope>NUCLEOTIDE SEQUENCE [GENOMIC DNA]</scope>
</reference>
<reference key="2">
    <citation type="journal article" date="2004" name="Proc. Natl. Acad. Sci. U.S.A.">
        <title>Divergence of T2R chemosensory receptor families in humans, bonobos, and chimpanzees.</title>
        <authorList>
            <person name="Parry C.M."/>
            <person name="Erkner A."/>
            <person name="le Coutre J."/>
        </authorList>
    </citation>
    <scope>NUCLEOTIDE SEQUENCE [GENOMIC DNA]</scope>
</reference>
<dbReference type="EMBL" id="AY724850">
    <property type="protein sequence ID" value="AAU21080.1"/>
    <property type="molecule type" value="Genomic_DNA"/>
</dbReference>
<dbReference type="EMBL" id="AY677141">
    <property type="protein sequence ID" value="AAV28569.1"/>
    <property type="molecule type" value="Genomic_DNA"/>
</dbReference>
<dbReference type="SMR" id="Q646D9"/>
<dbReference type="STRING" id="9597.ENSPPAP00000002019"/>
<dbReference type="GlyCosmos" id="Q646D9">
    <property type="glycosylation" value="3 sites, No reported glycans"/>
</dbReference>
<dbReference type="Ensembl" id="ENSPPAT00000009930.1">
    <property type="protein sequence ID" value="ENSPPAP00000002019.1"/>
    <property type="gene ID" value="ENSPPAG00000009180.1"/>
</dbReference>
<dbReference type="eggNOG" id="ENOG502SKRK">
    <property type="taxonomic scope" value="Eukaryota"/>
</dbReference>
<dbReference type="GeneTree" id="ENSGT01100000263477"/>
<dbReference type="OMA" id="WLIFGSW"/>
<dbReference type="Proteomes" id="UP000240080">
    <property type="component" value="Chromosome 12"/>
</dbReference>
<dbReference type="Bgee" id="ENSPPAG00000009180">
    <property type="expression patterns" value="Expressed in cerebellum and 6 other cell types or tissues"/>
</dbReference>
<dbReference type="GO" id="GO:0005886">
    <property type="term" value="C:plasma membrane"/>
    <property type="evidence" value="ECO:0007669"/>
    <property type="project" value="UniProtKB-ARBA"/>
</dbReference>
<dbReference type="GO" id="GO:0033038">
    <property type="term" value="F:bitter taste receptor activity"/>
    <property type="evidence" value="ECO:0007669"/>
    <property type="project" value="Ensembl"/>
</dbReference>
<dbReference type="GO" id="GO:0004930">
    <property type="term" value="F:G protein-coupled receptor activity"/>
    <property type="evidence" value="ECO:0007669"/>
    <property type="project" value="UniProtKB-KW"/>
</dbReference>
<dbReference type="CDD" id="cd15019">
    <property type="entry name" value="7tm_TAS2R14-like"/>
    <property type="match status" value="1"/>
</dbReference>
<dbReference type="FunFam" id="1.20.1070.10:FF:000042">
    <property type="entry name" value="Taste receptor type 2 member 7"/>
    <property type="match status" value="1"/>
</dbReference>
<dbReference type="Gene3D" id="1.20.1070.10">
    <property type="entry name" value="Rhodopsin 7-helix transmembrane proteins"/>
    <property type="match status" value="1"/>
</dbReference>
<dbReference type="InterPro" id="IPR007960">
    <property type="entry name" value="TAS2R"/>
</dbReference>
<dbReference type="PANTHER" id="PTHR11394">
    <property type="entry name" value="TASTE RECEPTOR TYPE 2"/>
    <property type="match status" value="1"/>
</dbReference>
<dbReference type="PANTHER" id="PTHR11394:SF23">
    <property type="entry name" value="TASTE RECEPTOR TYPE 2 MEMBER 14"/>
    <property type="match status" value="1"/>
</dbReference>
<dbReference type="Pfam" id="PF05296">
    <property type="entry name" value="TAS2R"/>
    <property type="match status" value="1"/>
</dbReference>
<dbReference type="SUPFAM" id="SSF81321">
    <property type="entry name" value="Family A G protein-coupled receptor-like"/>
    <property type="match status" value="1"/>
</dbReference>
<feature type="chain" id="PRO_0000082257" description="Taste receptor type 2 member 14">
    <location>
        <begin position="1"/>
        <end position="317"/>
    </location>
</feature>
<feature type="topological domain" description="Extracellular" evidence="1">
    <location>
        <begin position="1"/>
        <end position="7"/>
    </location>
</feature>
<feature type="transmembrane region" description="Helical; Name=1" evidence="1">
    <location>
        <begin position="8"/>
        <end position="28"/>
    </location>
</feature>
<feature type="topological domain" description="Cytoplasmic" evidence="1">
    <location>
        <begin position="29"/>
        <end position="55"/>
    </location>
</feature>
<feature type="transmembrane region" description="Helical; Name=2" evidence="1">
    <location>
        <begin position="56"/>
        <end position="76"/>
    </location>
</feature>
<feature type="topological domain" description="Extracellular" evidence="1">
    <location>
        <begin position="77"/>
        <end position="87"/>
    </location>
</feature>
<feature type="transmembrane region" description="Helical; Name=3" evidence="1">
    <location>
        <begin position="88"/>
        <end position="108"/>
    </location>
</feature>
<feature type="topological domain" description="Cytoplasmic" evidence="1">
    <location>
        <begin position="109"/>
        <end position="129"/>
    </location>
</feature>
<feature type="transmembrane region" description="Helical; Name=4" evidence="1">
    <location>
        <begin position="130"/>
        <end position="150"/>
    </location>
</feature>
<feature type="topological domain" description="Extracellular" evidence="1">
    <location>
        <begin position="151"/>
        <end position="184"/>
    </location>
</feature>
<feature type="transmembrane region" description="Helical; Name=5" evidence="1">
    <location>
        <begin position="185"/>
        <end position="205"/>
    </location>
</feature>
<feature type="topological domain" description="Cytoplasmic" evidence="1">
    <location>
        <begin position="206"/>
        <end position="232"/>
    </location>
</feature>
<feature type="transmembrane region" description="Helical; Name=6" evidence="1">
    <location>
        <begin position="233"/>
        <end position="253"/>
    </location>
</feature>
<feature type="topological domain" description="Extracellular" evidence="1">
    <location>
        <begin position="254"/>
        <end position="261"/>
    </location>
</feature>
<feature type="transmembrane region" description="Helical; Name=7" evidence="1">
    <location>
        <begin position="262"/>
        <end position="282"/>
    </location>
</feature>
<feature type="topological domain" description="Cytoplasmic" evidence="1">
    <location>
        <begin position="283"/>
        <end position="317"/>
    </location>
</feature>
<feature type="binding site" evidence="1">
    <location>
        <position position="86"/>
    </location>
    <ligand>
        <name>cholesterol</name>
        <dbReference type="ChEBI" id="CHEBI:16113"/>
    </ligand>
</feature>
<feature type="binding site" evidence="1">
    <location>
        <position position="89"/>
    </location>
    <ligand>
        <name>cholesterol</name>
        <dbReference type="ChEBI" id="CHEBI:16113"/>
    </ligand>
</feature>
<feature type="binding site" evidence="1">
    <location>
        <position position="180"/>
    </location>
    <ligand>
        <name>cholesterol</name>
        <dbReference type="ChEBI" id="CHEBI:16113"/>
    </ligand>
</feature>
<feature type="binding site" evidence="1">
    <location>
        <position position="265"/>
    </location>
    <ligand>
        <name>cholesterol</name>
        <dbReference type="ChEBI" id="CHEBI:16113"/>
    </ligand>
</feature>
<feature type="binding site" evidence="1">
    <location>
        <position position="268"/>
    </location>
    <ligand>
        <name>cholesterol</name>
        <dbReference type="ChEBI" id="CHEBI:16113"/>
    </ligand>
</feature>
<feature type="glycosylation site" description="N-linked (GlcNAc...) asparagine" evidence="2">
    <location>
        <position position="153"/>
    </location>
</feature>
<feature type="glycosylation site" description="N-linked (GlcNAc...) asparagine" evidence="2">
    <location>
        <position position="162"/>
    </location>
</feature>
<feature type="glycosylation site" description="N-linked (GlcNAc...) asparagine" evidence="2">
    <location>
        <position position="171"/>
    </location>
</feature>
<comment type="function">
    <text evidence="1">Gustducin-linked G-protein coupled receptor that plays a role in the perception of bitterness (By similarity). The activity of this receptor stimulates GNAT3, activating the gustducin G-protein pathway (By similarity). Likely plays a role in sensing the chemical composition of the gastrointestinal content and other extra-oral tissues via the inhibitory G-protein pathways (By similarity).</text>
</comment>
<comment type="catalytic activity">
    <reaction evidence="1">
        <text>Ca(2+)(in) = Ca(2+)(out)</text>
        <dbReference type="Rhea" id="RHEA:29671"/>
        <dbReference type="ChEBI" id="CHEBI:29108"/>
    </reaction>
</comment>
<comment type="catalytic activity">
    <reaction evidence="1">
        <text>3',5'-cyclic AMP(in) = 3',5'-cyclic AMP(out)</text>
        <dbReference type="Rhea" id="RHEA:76223"/>
        <dbReference type="ChEBI" id="CHEBI:58165"/>
    </reaction>
</comment>
<comment type="activity regulation">
    <text evidence="1">Basal activity is enhanced by binding to bitter tastants, such as flufenamic acid and aristolochic acid (By similarity). Regulated by cholesterol in a concentration-dependent manner (By similarity).</text>
</comment>
<comment type="subunit">
    <text evidence="1">Core component of the TAS2R14-GNAI1 complex, consisting of TAS2R14, GNAI1, GNB1 and GNG2; within the complex interacts with GNAI1 (By similarity). Core component of the TAS2R14-GNAT3 complex, consisting of TAS2R14, GNAT3, GNB1 and GNG2; within the complex interacts with GNAT3 (By similarity). Core component of the TAS2R14-GNAS2 complex, consisting of TAS2R14, GNAS2, GNB1 and GNG2; within the complex interacts with GNAS2 (By similarity).</text>
</comment>
<comment type="subcellular location">
    <subcellularLocation>
        <location>Membrane</location>
        <topology evidence="1">Multi-pass membrane protein</topology>
    </subcellularLocation>
</comment>
<comment type="miscellaneous">
    <text>Most taste cells may be activated by a limited number of bitter compounds; individual taste cells can discriminate among bitter stimuli.</text>
</comment>
<comment type="similarity">
    <text evidence="3">Belongs to the G-protein coupled receptor T2R family.</text>
</comment>
<keyword id="KW-0297">G-protein coupled receptor</keyword>
<keyword id="KW-0325">Glycoprotein</keyword>
<keyword id="KW-0472">Membrane</keyword>
<keyword id="KW-0675">Receptor</keyword>
<keyword id="KW-1185">Reference proteome</keyword>
<keyword id="KW-0716">Sensory transduction</keyword>
<keyword id="KW-0919">Taste</keyword>
<keyword id="KW-0807">Transducer</keyword>
<keyword id="KW-0812">Transmembrane</keyword>
<keyword id="KW-1133">Transmembrane helix</keyword>
<protein>
    <recommendedName>
        <fullName>Taste receptor type 2 member 14</fullName>
        <shortName>T2R14</shortName>
    </recommendedName>
</protein>
<organism>
    <name type="scientific">Pan paniscus</name>
    <name type="common">Pygmy chimpanzee</name>
    <name type="synonym">Bonobo</name>
    <dbReference type="NCBI Taxonomy" id="9597"/>
    <lineage>
        <taxon>Eukaryota</taxon>
        <taxon>Metazoa</taxon>
        <taxon>Chordata</taxon>
        <taxon>Craniata</taxon>
        <taxon>Vertebrata</taxon>
        <taxon>Euteleostomi</taxon>
        <taxon>Mammalia</taxon>
        <taxon>Eutheria</taxon>
        <taxon>Euarchontoglires</taxon>
        <taxon>Primates</taxon>
        <taxon>Haplorrhini</taxon>
        <taxon>Catarrhini</taxon>
        <taxon>Hominidae</taxon>
        <taxon>Pan</taxon>
    </lineage>
</organism>
<sequence>MGGVIKSIFTFVLIVEFIIGNLGNSFIALVNCIDWVKGRKISSVDRILTALAISKISLVWLIFGSWCVSVFFPALFATEKMFRMLTNIWTVINHFSVWLATGLGTFYFLKIANFSNSIFLYLKWRVKKVVLVLLLVTSVFLFLNIALINIHINASINGYRRNKTCSSDSSNFTRFSSLIVLTSTVFIFIPFTLSLAMFLLLIFSMWKHRKKMQHTVKRSGDASTKAHRGVKSMMTFFLLYAIFSLSFFISVWTSERLEENLIILSQVMGMAYPSCHSCVLILGNKKLRQASLSVLLWLRYMFKDGEPSGHKEFRESS</sequence>
<name>T2R14_PANPA</name>
<proteinExistence type="inferred from homology"/>
<accession>Q646D9</accession>